<name>GPN1_BOVIN</name>
<evidence type="ECO:0000250" key="1">
    <source>
        <dbReference type="UniProtKB" id="Q9HCN4"/>
    </source>
</evidence>
<evidence type="ECO:0000250" key="2">
    <source>
        <dbReference type="UniProtKB" id="Q9UYR9"/>
    </source>
</evidence>
<evidence type="ECO:0000256" key="3">
    <source>
        <dbReference type="SAM" id="MobiDB-lite"/>
    </source>
</evidence>
<evidence type="ECO:0000305" key="4"/>
<feature type="initiator methionine" description="Removed" evidence="1">
    <location>
        <position position="1"/>
    </location>
</feature>
<feature type="chain" id="PRO_0000330934" description="GPN-loop GTPase 1">
    <location>
        <begin position="2"/>
        <end position="373"/>
    </location>
</feature>
<feature type="region of interest" description="Disordered" evidence="3">
    <location>
        <begin position="304"/>
        <end position="373"/>
    </location>
</feature>
<feature type="short sequence motif" description="Gly-Pro-Asn (GPN)-loop; involved in dimer interface" evidence="2">
    <location>
        <begin position="86"/>
        <end position="88"/>
    </location>
</feature>
<feature type="compositionally biased region" description="Acidic residues" evidence="3">
    <location>
        <begin position="330"/>
        <end position="342"/>
    </location>
</feature>
<feature type="compositionally biased region" description="Basic and acidic residues" evidence="3">
    <location>
        <begin position="343"/>
        <end position="355"/>
    </location>
</feature>
<feature type="binding site" evidence="2">
    <location>
        <begin position="29"/>
        <end position="34"/>
    </location>
    <ligand>
        <name>GTP</name>
        <dbReference type="ChEBI" id="CHEBI:37565"/>
    </ligand>
</feature>
<feature type="binding site" evidence="2">
    <location>
        <begin position="189"/>
        <end position="192"/>
    </location>
    <ligand>
        <name>GTP</name>
        <dbReference type="ChEBI" id="CHEBI:37565"/>
    </ligand>
</feature>
<feature type="site" description="Stabilizes the phosphate intermediate; shared with dimeric partner" evidence="2">
    <location>
        <position position="88"/>
    </location>
</feature>
<feature type="modified residue" description="N-acetylalanine" evidence="1">
    <location>
        <position position="2"/>
    </location>
</feature>
<feature type="modified residue" description="Phosphoserine" evidence="1">
    <location>
        <position position="301"/>
    </location>
</feature>
<feature type="modified residue" description="Phosphoserine" evidence="1">
    <location>
        <position position="312"/>
    </location>
</feature>
<feature type="modified residue" description="Phosphoserine" evidence="1">
    <location>
        <position position="314"/>
    </location>
</feature>
<feature type="modified residue" description="Phosphothreonine" evidence="1">
    <location>
        <position position="328"/>
    </location>
</feature>
<feature type="modified residue" description="Phosphoserine" evidence="1">
    <location>
        <position position="338"/>
    </location>
</feature>
<feature type="modified residue" description="Phosphothreonine" evidence="1">
    <location>
        <position position="340"/>
    </location>
</feature>
<protein>
    <recommendedName>
        <fullName evidence="1">GPN-loop GTPase 1</fullName>
        <ecNumber evidence="1">3.6.5.-</ecNumber>
    </recommendedName>
    <alternativeName>
        <fullName evidence="1">XPA-binding protein 1</fullName>
    </alternativeName>
</protein>
<keyword id="KW-0007">Acetylation</keyword>
<keyword id="KW-0963">Cytoplasm</keyword>
<keyword id="KW-0342">GTP-binding</keyword>
<keyword id="KW-0378">Hydrolase</keyword>
<keyword id="KW-0547">Nucleotide-binding</keyword>
<keyword id="KW-0539">Nucleus</keyword>
<keyword id="KW-0597">Phosphoprotein</keyword>
<keyword id="KW-1185">Reference proteome</keyword>
<proteinExistence type="evidence at transcript level"/>
<gene>
    <name evidence="1" type="primary">GPN1</name>
    <name evidence="1" type="synonym">XAB1</name>
</gene>
<dbReference type="EC" id="3.6.5.-" evidence="1"/>
<dbReference type="EMBL" id="BC114712">
    <property type="protein sequence ID" value="AAI14713.1"/>
    <property type="molecule type" value="mRNA"/>
</dbReference>
<dbReference type="RefSeq" id="NP_001076861.1">
    <property type="nucleotide sequence ID" value="NM_001083392.1"/>
</dbReference>
<dbReference type="SMR" id="A4FUD1"/>
<dbReference type="FunCoup" id="A4FUD1">
    <property type="interactions" value="4824"/>
</dbReference>
<dbReference type="STRING" id="9913.ENSBTAP00000005098"/>
<dbReference type="PaxDb" id="9913-ENSBTAP00000005098"/>
<dbReference type="GeneID" id="508522"/>
<dbReference type="KEGG" id="bta:508522"/>
<dbReference type="CTD" id="11321"/>
<dbReference type="VEuPathDB" id="HostDB:ENSBTAG00000003904"/>
<dbReference type="eggNOG" id="KOG1532">
    <property type="taxonomic scope" value="Eukaryota"/>
</dbReference>
<dbReference type="HOGENOM" id="CLU_037460_1_2_1"/>
<dbReference type="InParanoid" id="A4FUD1"/>
<dbReference type="OMA" id="MIIVFNK"/>
<dbReference type="OrthoDB" id="243313at2759"/>
<dbReference type="TreeFam" id="TF313204"/>
<dbReference type="Proteomes" id="UP000009136">
    <property type="component" value="Chromosome 11"/>
</dbReference>
<dbReference type="Bgee" id="ENSBTAG00000003904">
    <property type="expression patterns" value="Expressed in olfactory segment of nasal mucosa and 105 other cell types or tissues"/>
</dbReference>
<dbReference type="GO" id="GO:0005737">
    <property type="term" value="C:cytoplasm"/>
    <property type="evidence" value="ECO:0007669"/>
    <property type="project" value="UniProtKB-SubCell"/>
</dbReference>
<dbReference type="GO" id="GO:0005634">
    <property type="term" value="C:nucleus"/>
    <property type="evidence" value="ECO:0007669"/>
    <property type="project" value="UniProtKB-SubCell"/>
</dbReference>
<dbReference type="GO" id="GO:0016887">
    <property type="term" value="F:ATP hydrolysis activity"/>
    <property type="evidence" value="ECO:0007669"/>
    <property type="project" value="InterPro"/>
</dbReference>
<dbReference type="GO" id="GO:0005525">
    <property type="term" value="F:GTP binding"/>
    <property type="evidence" value="ECO:0007669"/>
    <property type="project" value="UniProtKB-KW"/>
</dbReference>
<dbReference type="GO" id="GO:0003924">
    <property type="term" value="F:GTPase activity"/>
    <property type="evidence" value="ECO:0000318"/>
    <property type="project" value="GO_Central"/>
</dbReference>
<dbReference type="CDD" id="cd17870">
    <property type="entry name" value="GPN1"/>
    <property type="match status" value="1"/>
</dbReference>
<dbReference type="FunFam" id="3.40.50.300:FF:000696">
    <property type="entry name" value="GPN-loop GTPase"/>
    <property type="match status" value="1"/>
</dbReference>
<dbReference type="Gene3D" id="3.40.50.300">
    <property type="entry name" value="P-loop containing nucleotide triphosphate hydrolases"/>
    <property type="match status" value="1"/>
</dbReference>
<dbReference type="InterPro" id="IPR003593">
    <property type="entry name" value="AAA+_ATPase"/>
</dbReference>
<dbReference type="InterPro" id="IPR004130">
    <property type="entry name" value="Gpn"/>
</dbReference>
<dbReference type="InterPro" id="IPR030230">
    <property type="entry name" value="Gpn1/Npa3/XAB1"/>
</dbReference>
<dbReference type="InterPro" id="IPR027417">
    <property type="entry name" value="P-loop_NTPase"/>
</dbReference>
<dbReference type="PANTHER" id="PTHR21231:SF8">
    <property type="entry name" value="GPN-LOOP GTPASE 1"/>
    <property type="match status" value="1"/>
</dbReference>
<dbReference type="PANTHER" id="PTHR21231">
    <property type="entry name" value="XPA-BINDING PROTEIN 1-RELATED"/>
    <property type="match status" value="1"/>
</dbReference>
<dbReference type="Pfam" id="PF03029">
    <property type="entry name" value="ATP_bind_1"/>
    <property type="match status" value="1"/>
</dbReference>
<dbReference type="SMART" id="SM00382">
    <property type="entry name" value="AAA"/>
    <property type="match status" value="1"/>
</dbReference>
<dbReference type="SUPFAM" id="SSF52540">
    <property type="entry name" value="P-loop containing nucleoside triphosphate hydrolases"/>
    <property type="match status" value="1"/>
</dbReference>
<organism>
    <name type="scientific">Bos taurus</name>
    <name type="common">Bovine</name>
    <dbReference type="NCBI Taxonomy" id="9913"/>
    <lineage>
        <taxon>Eukaryota</taxon>
        <taxon>Metazoa</taxon>
        <taxon>Chordata</taxon>
        <taxon>Craniata</taxon>
        <taxon>Vertebrata</taxon>
        <taxon>Euteleostomi</taxon>
        <taxon>Mammalia</taxon>
        <taxon>Eutheria</taxon>
        <taxon>Laurasiatheria</taxon>
        <taxon>Artiodactyla</taxon>
        <taxon>Ruminantia</taxon>
        <taxon>Pecora</taxon>
        <taxon>Bovidae</taxon>
        <taxon>Bovinae</taxon>
        <taxon>Bos</taxon>
    </lineage>
</organism>
<sequence>MAAPASATESQASGGPRPPACLLVLGMAGSGKTTFVQRLTGYLHSQGCPPYVINLDPAVHEVPFPANIDIRDTVKYKEVMKQYGLGPNGGIVTSLNLFATRFDQVMKFIEKAQNMSKYVLIDTPGQIEVFTWSASGTIITEALASSFPTIVIYVMDTSRSTNPVTFMSNMLYACSILYKTKLPFIVVMNKTDIIDHSFAVEWMQDFEAFQDALNQETTYVSNLTRSMSLVLDEFYSSLRVVGVSAVLGTGLDELFVQVASATEEYEREYRPEYERLKKSLASAQSQQQKEQLERLQKDMGSVALDTGTATGSSSPVLDPSDLILTRGTLDEEDEEADSDTDDIDHRVTEESREEPAFQNFMQESMAQYWKKNK</sequence>
<reference key="1">
    <citation type="submission" date="2006-04" db="EMBL/GenBank/DDBJ databases">
        <authorList>
            <consortium name="NIH - Mammalian Gene Collection (MGC) project"/>
        </authorList>
    </citation>
    <scope>NUCLEOTIDE SEQUENCE [LARGE SCALE MRNA]</scope>
    <source>
        <strain>Hereford</strain>
        <tissue>Uterus</tissue>
    </source>
</reference>
<accession>A4FUD1</accession>
<comment type="function">
    <text evidence="1">Small GTPase required for proper nuclear import of RNA polymerase II (RNAPII). May act at an RNAP assembly step prior to nuclear import. Forms an interface between the RNA polymerase II enzyme and chaperone/scaffolding proteins, suggesting that it is required to connect RNA polymerase II to regulators of protein complex formation. May be involved in nuclear localization of XPA.</text>
</comment>
<comment type="subunit">
    <text evidence="1">Heterodimer with GPN3. Binds to RNA polymerase II (RNAPII). Interacts directly with RNAPII subunits RPB4 and RPB7 and the CTD of RPB1. Interacts with XPA.</text>
</comment>
<comment type="subcellular location">
    <subcellularLocation>
        <location evidence="1">Cytoplasm</location>
    </subcellularLocation>
    <subcellularLocation>
        <location evidence="1">Nucleus</location>
    </subcellularLocation>
    <text evidence="1">Shuttles between the nucleus and the cytoplasm.</text>
</comment>
<comment type="similarity">
    <text evidence="4">Belongs to the GPN-loop GTPase family.</text>
</comment>